<feature type="chain" id="PRO_0000257558" description="Putative pre-16S rRNA nuclease">
    <location>
        <begin position="1"/>
        <end position="155"/>
    </location>
</feature>
<accession>Q2G9X2</accession>
<organism>
    <name type="scientific">Novosphingobium aromaticivorans (strain ATCC 700278 / DSM 12444 / CCUG 56034 / CIP 105152 / NBRC 16084 / F199)</name>
    <dbReference type="NCBI Taxonomy" id="279238"/>
    <lineage>
        <taxon>Bacteria</taxon>
        <taxon>Pseudomonadati</taxon>
        <taxon>Pseudomonadota</taxon>
        <taxon>Alphaproteobacteria</taxon>
        <taxon>Sphingomonadales</taxon>
        <taxon>Sphingomonadaceae</taxon>
        <taxon>Novosphingobium</taxon>
    </lineage>
</organism>
<proteinExistence type="inferred from homology"/>
<protein>
    <recommendedName>
        <fullName evidence="1">Putative pre-16S rRNA nuclease</fullName>
        <ecNumber evidence="1">3.1.-.-</ecNumber>
    </recommendedName>
</protein>
<sequence length="155" mass="16695">MITQSALEMRDALAEGGSLIGLDTGTKTIGVALCDREWRFATAGTTIRRTKFAADKAQIRAIVAERGVKGIVIGLPLNMDGSESPRSQGARAMARNLEDLGLPILLWDERWTTQAAERAMIEQDFSRAKRAERIDSHAAALILQGAIDALAGSAF</sequence>
<evidence type="ECO:0000255" key="1">
    <source>
        <dbReference type="HAMAP-Rule" id="MF_00651"/>
    </source>
</evidence>
<name>YQGF_NOVAD</name>
<gene>
    <name type="ordered locus">Saro_0906</name>
</gene>
<reference key="1">
    <citation type="submission" date="2006-01" db="EMBL/GenBank/DDBJ databases">
        <title>Complete sequence of Novosphingobium aromaticivorans DSM 12444.</title>
        <authorList>
            <consortium name="US DOE Joint Genome Institute"/>
            <person name="Copeland A."/>
            <person name="Lucas S."/>
            <person name="Lapidus A."/>
            <person name="Barry K."/>
            <person name="Detter J.C."/>
            <person name="Glavina T."/>
            <person name="Hammon N."/>
            <person name="Israni S."/>
            <person name="Pitluck S."/>
            <person name="Chain P."/>
            <person name="Malfatti S."/>
            <person name="Shin M."/>
            <person name="Vergez L."/>
            <person name="Schmutz J."/>
            <person name="Larimer F."/>
            <person name="Land M."/>
            <person name="Kyrpides N."/>
            <person name="Ivanova N."/>
            <person name="Fredrickson J."/>
            <person name="Balkwill D."/>
            <person name="Romine M.F."/>
            <person name="Richardson P."/>
        </authorList>
    </citation>
    <scope>NUCLEOTIDE SEQUENCE [LARGE SCALE GENOMIC DNA]</scope>
    <source>
        <strain>ATCC 700278 / DSM 12444 / CCUG 56034 / CIP 105152 / NBRC 16084 / F199</strain>
    </source>
</reference>
<dbReference type="EC" id="3.1.-.-" evidence="1"/>
<dbReference type="EMBL" id="CP000248">
    <property type="protein sequence ID" value="ABD25351.1"/>
    <property type="molecule type" value="Genomic_DNA"/>
</dbReference>
<dbReference type="SMR" id="Q2G9X2"/>
<dbReference type="STRING" id="279238.Saro_0906"/>
<dbReference type="KEGG" id="nar:Saro_0906"/>
<dbReference type="eggNOG" id="COG0816">
    <property type="taxonomic scope" value="Bacteria"/>
</dbReference>
<dbReference type="HOGENOM" id="CLU_098240_1_1_5"/>
<dbReference type="Proteomes" id="UP000009134">
    <property type="component" value="Chromosome"/>
</dbReference>
<dbReference type="GO" id="GO:0005829">
    <property type="term" value="C:cytosol"/>
    <property type="evidence" value="ECO:0007669"/>
    <property type="project" value="TreeGrafter"/>
</dbReference>
<dbReference type="GO" id="GO:0004518">
    <property type="term" value="F:nuclease activity"/>
    <property type="evidence" value="ECO:0007669"/>
    <property type="project" value="UniProtKB-KW"/>
</dbReference>
<dbReference type="GO" id="GO:0000967">
    <property type="term" value="P:rRNA 5'-end processing"/>
    <property type="evidence" value="ECO:0007669"/>
    <property type="project" value="UniProtKB-UniRule"/>
</dbReference>
<dbReference type="CDD" id="cd16964">
    <property type="entry name" value="YqgF"/>
    <property type="match status" value="1"/>
</dbReference>
<dbReference type="Gene3D" id="3.30.420.140">
    <property type="entry name" value="YqgF/RNase H-like domain"/>
    <property type="match status" value="1"/>
</dbReference>
<dbReference type="HAMAP" id="MF_00651">
    <property type="entry name" value="Nuclease_YqgF"/>
    <property type="match status" value="1"/>
</dbReference>
<dbReference type="InterPro" id="IPR012337">
    <property type="entry name" value="RNaseH-like_sf"/>
</dbReference>
<dbReference type="InterPro" id="IPR005227">
    <property type="entry name" value="YqgF"/>
</dbReference>
<dbReference type="InterPro" id="IPR006641">
    <property type="entry name" value="YqgF/RNaseH-like_dom"/>
</dbReference>
<dbReference type="InterPro" id="IPR037027">
    <property type="entry name" value="YqgF/RNaseH-like_dom_sf"/>
</dbReference>
<dbReference type="NCBIfam" id="TIGR00250">
    <property type="entry name" value="RNAse_H_YqgF"/>
    <property type="match status" value="1"/>
</dbReference>
<dbReference type="PANTHER" id="PTHR33317">
    <property type="entry name" value="POLYNUCLEOTIDYL TRANSFERASE, RIBONUCLEASE H-LIKE SUPERFAMILY PROTEIN"/>
    <property type="match status" value="1"/>
</dbReference>
<dbReference type="PANTHER" id="PTHR33317:SF4">
    <property type="entry name" value="POLYNUCLEOTIDYL TRANSFERASE, RIBONUCLEASE H-LIKE SUPERFAMILY PROTEIN"/>
    <property type="match status" value="1"/>
</dbReference>
<dbReference type="Pfam" id="PF03652">
    <property type="entry name" value="RuvX"/>
    <property type="match status" value="1"/>
</dbReference>
<dbReference type="SMART" id="SM00732">
    <property type="entry name" value="YqgFc"/>
    <property type="match status" value="1"/>
</dbReference>
<dbReference type="SUPFAM" id="SSF53098">
    <property type="entry name" value="Ribonuclease H-like"/>
    <property type="match status" value="1"/>
</dbReference>
<keyword id="KW-0963">Cytoplasm</keyword>
<keyword id="KW-0378">Hydrolase</keyword>
<keyword id="KW-0540">Nuclease</keyword>
<keyword id="KW-1185">Reference proteome</keyword>
<keyword id="KW-0690">Ribosome biogenesis</keyword>
<comment type="function">
    <text evidence="1">Could be a nuclease involved in processing of the 5'-end of pre-16S rRNA.</text>
</comment>
<comment type="subcellular location">
    <subcellularLocation>
        <location evidence="1">Cytoplasm</location>
    </subcellularLocation>
</comment>
<comment type="similarity">
    <text evidence="1">Belongs to the YqgF nuclease family.</text>
</comment>